<feature type="signal peptide" evidence="3">
    <location>
        <begin position="1"/>
        <end position="43"/>
    </location>
</feature>
<feature type="chain" id="PRO_0000284802" description="Adherens junction-associated protein 1" evidence="3">
    <location>
        <begin position="44"/>
        <end position="412"/>
    </location>
</feature>
<feature type="topological domain" description="Extracellular" evidence="3">
    <location>
        <begin position="44"/>
        <end position="284"/>
    </location>
</feature>
<feature type="transmembrane region" description="Helical" evidence="3">
    <location>
        <begin position="285"/>
        <end position="305"/>
    </location>
</feature>
<feature type="topological domain" description="Cytoplasmic" evidence="3">
    <location>
        <begin position="306"/>
        <end position="412"/>
    </location>
</feature>
<feature type="region of interest" description="Disordered" evidence="4">
    <location>
        <begin position="62"/>
        <end position="175"/>
    </location>
</feature>
<feature type="region of interest" description="Disordered" evidence="4">
    <location>
        <begin position="243"/>
        <end position="271"/>
    </location>
</feature>
<feature type="region of interest" description="Targeting signals" evidence="1">
    <location>
        <begin position="305"/>
        <end position="412"/>
    </location>
</feature>
<feature type="compositionally biased region" description="Low complexity" evidence="4">
    <location>
        <begin position="121"/>
        <end position="146"/>
    </location>
</feature>
<feature type="compositionally biased region" description="Basic and acidic residues" evidence="4">
    <location>
        <begin position="160"/>
        <end position="171"/>
    </location>
</feature>
<feature type="compositionally biased region" description="Low complexity" evidence="4">
    <location>
        <begin position="248"/>
        <end position="263"/>
    </location>
</feature>
<evidence type="ECO:0000250" key="1"/>
<evidence type="ECO:0000250" key="2">
    <source>
        <dbReference type="UniProtKB" id="Q9UKB5"/>
    </source>
</evidence>
<evidence type="ECO:0000255" key="3"/>
<evidence type="ECO:0000256" key="4">
    <source>
        <dbReference type="SAM" id="MobiDB-lite"/>
    </source>
</evidence>
<protein>
    <recommendedName>
        <fullName>Adherens junction-associated protein 1</fullName>
    </recommendedName>
</protein>
<reference key="1">
    <citation type="journal article" date="2009" name="PLoS Biol.">
        <title>Lineage-specific biology revealed by a finished genome assembly of the mouse.</title>
        <authorList>
            <person name="Church D.M."/>
            <person name="Goodstadt L."/>
            <person name="Hillier L.W."/>
            <person name="Zody M.C."/>
            <person name="Goldstein S."/>
            <person name="She X."/>
            <person name="Bult C.J."/>
            <person name="Agarwala R."/>
            <person name="Cherry J.L."/>
            <person name="DiCuccio M."/>
            <person name="Hlavina W."/>
            <person name="Kapustin Y."/>
            <person name="Meric P."/>
            <person name="Maglott D."/>
            <person name="Birtle Z."/>
            <person name="Marques A.C."/>
            <person name="Graves T."/>
            <person name="Zhou S."/>
            <person name="Teague B."/>
            <person name="Potamousis K."/>
            <person name="Churas C."/>
            <person name="Place M."/>
            <person name="Herschleb J."/>
            <person name="Runnheim R."/>
            <person name="Forrest D."/>
            <person name="Amos-Landgraf J."/>
            <person name="Schwartz D.C."/>
            <person name="Cheng Z."/>
            <person name="Lindblad-Toh K."/>
            <person name="Eichler E.E."/>
            <person name="Ponting C.P."/>
        </authorList>
    </citation>
    <scope>NUCLEOTIDE SEQUENCE [LARGE SCALE GENOMIC DNA]</scope>
    <source>
        <strain>C57BL/6J</strain>
    </source>
</reference>
<reference key="2">
    <citation type="journal article" date="2004" name="Genome Res.">
        <title>The status, quality, and expansion of the NIH full-length cDNA project: the Mammalian Gene Collection (MGC).</title>
        <authorList>
            <consortium name="The MGC Project Team"/>
        </authorList>
    </citation>
    <scope>NUCLEOTIDE SEQUENCE [LARGE SCALE MRNA]</scope>
    <source>
        <tissue>Brain</tissue>
    </source>
</reference>
<dbReference type="EMBL" id="AL805910">
    <property type="status" value="NOT_ANNOTATED_CDS"/>
    <property type="molecule type" value="Genomic_DNA"/>
</dbReference>
<dbReference type="EMBL" id="AL954390">
    <property type="status" value="NOT_ANNOTATED_CDS"/>
    <property type="molecule type" value="Genomic_DNA"/>
</dbReference>
<dbReference type="EMBL" id="BC147229">
    <property type="protein sequence ID" value="AAI47230.1"/>
    <property type="molecule type" value="mRNA"/>
</dbReference>
<dbReference type="EMBL" id="BC147230">
    <property type="protein sequence ID" value="AAI47231.1"/>
    <property type="molecule type" value="mRNA"/>
</dbReference>
<dbReference type="EMBL" id="BC147654">
    <property type="protein sequence ID" value="AAI47655.1"/>
    <property type="molecule type" value="mRNA"/>
</dbReference>
<dbReference type="EMBL" id="BC147658">
    <property type="protein sequence ID" value="AAI47659.1"/>
    <property type="molecule type" value="mRNA"/>
</dbReference>
<dbReference type="CCDS" id="CCDS38987.1"/>
<dbReference type="RefSeq" id="NP_001092769.1">
    <property type="nucleotide sequence ID" value="NM_001099299.1"/>
</dbReference>
<dbReference type="FunCoup" id="A2ALI5">
    <property type="interactions" value="269"/>
</dbReference>
<dbReference type="STRING" id="10090.ENSMUSP00000101271"/>
<dbReference type="GlyGen" id="A2ALI5">
    <property type="glycosylation" value="1 site"/>
</dbReference>
<dbReference type="iPTMnet" id="A2ALI5"/>
<dbReference type="PhosphoSitePlus" id="A2ALI5"/>
<dbReference type="PaxDb" id="10090-ENSMUSP00000101271"/>
<dbReference type="PeptideAtlas" id="A2ALI5"/>
<dbReference type="ProteomicsDB" id="296145"/>
<dbReference type="Antibodypedia" id="2726">
    <property type="antibodies" value="51 antibodies from 19 providers"/>
</dbReference>
<dbReference type="Ensembl" id="ENSMUST00000105646.3">
    <property type="protein sequence ID" value="ENSMUSP00000101271.2"/>
    <property type="gene ID" value="ENSMUSG00000039546.10"/>
</dbReference>
<dbReference type="GeneID" id="230959"/>
<dbReference type="KEGG" id="mmu:230959"/>
<dbReference type="UCSC" id="uc008was.1">
    <property type="organism name" value="mouse"/>
</dbReference>
<dbReference type="AGR" id="MGI:2685419"/>
<dbReference type="CTD" id="55966"/>
<dbReference type="MGI" id="MGI:2685419">
    <property type="gene designation" value="Ajap1"/>
</dbReference>
<dbReference type="VEuPathDB" id="HostDB:ENSMUSG00000039546"/>
<dbReference type="eggNOG" id="ENOG502QVMU">
    <property type="taxonomic scope" value="Eukaryota"/>
</dbReference>
<dbReference type="GeneTree" id="ENSGT00510000048586"/>
<dbReference type="HOGENOM" id="CLU_055642_1_0_1"/>
<dbReference type="InParanoid" id="A2ALI5"/>
<dbReference type="OMA" id="PEANTFP"/>
<dbReference type="OrthoDB" id="9949932at2759"/>
<dbReference type="TreeFam" id="TF336539"/>
<dbReference type="BioGRID-ORCS" id="230959">
    <property type="hits" value="1 hit in 76 CRISPR screens"/>
</dbReference>
<dbReference type="ChiTaRS" id="Ajap1">
    <property type="organism name" value="mouse"/>
</dbReference>
<dbReference type="PRO" id="PR:A2ALI5"/>
<dbReference type="Proteomes" id="UP000000589">
    <property type="component" value="Chromosome 4"/>
</dbReference>
<dbReference type="RNAct" id="A2ALI5">
    <property type="molecule type" value="protein"/>
</dbReference>
<dbReference type="Bgee" id="ENSMUSG00000039546">
    <property type="expression patterns" value="Expressed in lumbar subsegment of spinal cord and 86 other cell types or tissues"/>
</dbReference>
<dbReference type="ExpressionAtlas" id="A2ALI5">
    <property type="expression patterns" value="baseline and differential"/>
</dbReference>
<dbReference type="GO" id="GO:0005912">
    <property type="term" value="C:adherens junction"/>
    <property type="evidence" value="ECO:0007669"/>
    <property type="project" value="UniProtKB-SubCell"/>
</dbReference>
<dbReference type="GO" id="GO:0016324">
    <property type="term" value="C:apical plasma membrane"/>
    <property type="evidence" value="ECO:0007669"/>
    <property type="project" value="UniProtKB-SubCell"/>
</dbReference>
<dbReference type="GO" id="GO:0016323">
    <property type="term" value="C:basolateral plasma membrane"/>
    <property type="evidence" value="ECO:0000250"/>
    <property type="project" value="UniProtKB"/>
</dbReference>
<dbReference type="GO" id="GO:0009986">
    <property type="term" value="C:cell surface"/>
    <property type="evidence" value="ECO:0007669"/>
    <property type="project" value="Ensembl"/>
</dbReference>
<dbReference type="GO" id="GO:0044291">
    <property type="term" value="C:cell-cell contact zone"/>
    <property type="evidence" value="ECO:0007669"/>
    <property type="project" value="Ensembl"/>
</dbReference>
<dbReference type="GO" id="GO:0009898">
    <property type="term" value="C:cytoplasmic side of plasma membrane"/>
    <property type="evidence" value="ECO:0007669"/>
    <property type="project" value="Ensembl"/>
</dbReference>
<dbReference type="GO" id="GO:0008013">
    <property type="term" value="F:beta-catenin binding"/>
    <property type="evidence" value="ECO:0007669"/>
    <property type="project" value="Ensembl"/>
</dbReference>
<dbReference type="GO" id="GO:0019904">
    <property type="term" value="F:protein domain specific binding"/>
    <property type="evidence" value="ECO:0000314"/>
    <property type="project" value="MGI"/>
</dbReference>
<dbReference type="GO" id="GO:0044877">
    <property type="term" value="F:protein-containing complex binding"/>
    <property type="evidence" value="ECO:0007669"/>
    <property type="project" value="Ensembl"/>
</dbReference>
<dbReference type="GO" id="GO:0007155">
    <property type="term" value="P:cell adhesion"/>
    <property type="evidence" value="ECO:0007669"/>
    <property type="project" value="UniProtKB-KW"/>
</dbReference>
<dbReference type="GO" id="GO:0001953">
    <property type="term" value="P:negative regulation of cell-matrix adhesion"/>
    <property type="evidence" value="ECO:0007669"/>
    <property type="project" value="Ensembl"/>
</dbReference>
<dbReference type="GO" id="GO:0061045">
    <property type="term" value="P:negative regulation of wound healing"/>
    <property type="evidence" value="ECO:0007669"/>
    <property type="project" value="Ensembl"/>
</dbReference>
<dbReference type="GO" id="GO:0030860">
    <property type="term" value="P:regulation of polarized epithelial cell differentiation"/>
    <property type="evidence" value="ECO:0007669"/>
    <property type="project" value="Ensembl"/>
</dbReference>
<dbReference type="InterPro" id="IPR039239">
    <property type="entry name" value="AJAP1"/>
</dbReference>
<dbReference type="InterPro" id="IPR029198">
    <property type="entry name" value="AJAP1_PANP_C"/>
</dbReference>
<dbReference type="PANTHER" id="PTHR32422">
    <property type="entry name" value="ADHERENS JUNCTION-ASSOCIATED PROTEIN 1"/>
    <property type="match status" value="1"/>
</dbReference>
<dbReference type="PANTHER" id="PTHR32422:SF0">
    <property type="entry name" value="ADHERENS JUNCTION-ASSOCIATED PROTEIN 1"/>
    <property type="match status" value="1"/>
</dbReference>
<dbReference type="Pfam" id="PF15298">
    <property type="entry name" value="AJAP1_PANP_C"/>
    <property type="match status" value="1"/>
</dbReference>
<keyword id="KW-0130">Cell adhesion</keyword>
<keyword id="KW-0965">Cell junction</keyword>
<keyword id="KW-1003">Cell membrane</keyword>
<keyword id="KW-0472">Membrane</keyword>
<keyword id="KW-1185">Reference proteome</keyword>
<keyword id="KW-0732">Signal</keyword>
<keyword id="KW-0812">Transmembrane</keyword>
<keyword id="KW-1133">Transmembrane helix</keyword>
<comment type="function">
    <text evidence="1">Plays a role in cell adhesion and cell migration.</text>
</comment>
<comment type="subunit">
    <text evidence="2">Forms a complex with CDH1 and CTNNB1; interacts directly with CTNNB1 (By similarity). Interacts with AP1M2 and isoform 2 of BSG/CD147 (By similarity).</text>
</comment>
<comment type="subcellular location">
    <subcellularLocation>
        <location evidence="2">Basolateral cell membrane</location>
        <topology evidence="3">Single-pass type I membrane protein</topology>
    </subcellularLocation>
    <subcellularLocation>
        <location evidence="2">Apical cell membrane</location>
        <topology evidence="3">Single-pass type I membrane protein</topology>
    </subcellularLocation>
    <subcellularLocation>
        <location evidence="2">Cell junction</location>
        <location evidence="2">Adherens junction</location>
    </subcellularLocation>
    <text evidence="2">Mainly basolateral. Localization is mediated by AP1M2.</text>
</comment>
<accession>A2ALI5</accession>
<accession>B2RVK0</accession>
<gene>
    <name type="primary">Ajap1</name>
    <name type="synonym">Gm573</name>
</gene>
<proteinExistence type="evidence at transcript level"/>
<name>AJAP1_MOUSE</name>
<organism>
    <name type="scientific">Mus musculus</name>
    <name type="common">Mouse</name>
    <dbReference type="NCBI Taxonomy" id="10090"/>
    <lineage>
        <taxon>Eukaryota</taxon>
        <taxon>Metazoa</taxon>
        <taxon>Chordata</taxon>
        <taxon>Craniata</taxon>
        <taxon>Vertebrata</taxon>
        <taxon>Euteleostomi</taxon>
        <taxon>Mammalia</taxon>
        <taxon>Eutheria</taxon>
        <taxon>Euarchontoglires</taxon>
        <taxon>Glires</taxon>
        <taxon>Rodentia</taxon>
        <taxon>Myomorpha</taxon>
        <taxon>Muroidea</taxon>
        <taxon>Muridae</taxon>
        <taxon>Murinae</taxon>
        <taxon>Mus</taxon>
        <taxon>Mus</taxon>
    </lineage>
</organism>
<sequence>MWIQQLLGLSSMSIRWPGRSLGSHAWILIAMLQLAVDFPSCDSLGPGPEFRLLSRPQRPQRLWSLRSGPPTRLPTPAWSPRAARAERAHGPIQMQTPRARRAHRPRDQVATLGPKGGLTKPPAATRSSPSLASATASSSIVTAGAAEHQGLLRRGRRHTHDTEFNDFDFRGGRPTTETEFIAWGPTGDEDALESNTFPGGFGPTTVSILQTRKTTVATTTTTTAASTATAMTLQTKGVTESLDPWKRTPVGVSTTEPSTSPSSNGKDIQPPRILGETSGLAVHQIITITVSLIMVIAALITTLVLKNCCAPSGHTRRNSHQRKMNQQEESCQNLTDFTPARVPSSVDIFTAYNETLQCSHECVRASVPVYADETLHSTGEYKSTFNGNRTSSADRHLIPVAFVSEKWFEISC</sequence>